<proteinExistence type="evidence at protein level"/>
<comment type="function">
    <text evidence="2">Involved in the biosynthesis of germacrene D. Can use farnesyl diphosphate as substrate, but not geranyl diphosphate or geranylgeranyl diphosphate. Produces mainly (-)-germacrene D along with gamma-cadinene.</text>
</comment>
<comment type="catalytic activity">
    <reaction evidence="2">
        <text>(2E,6E)-farnesyl diphosphate + H2O = (1E,4S,5E,7R)-germacra-1(10),5-dien-11-ol + diphosphate</text>
        <dbReference type="Rhea" id="RHEA:22436"/>
        <dbReference type="ChEBI" id="CHEBI:15377"/>
        <dbReference type="ChEBI" id="CHEBI:33019"/>
        <dbReference type="ChEBI" id="CHEBI:46734"/>
        <dbReference type="ChEBI" id="CHEBI:175763"/>
        <dbReference type="EC" id="4.2.3.22"/>
    </reaction>
</comment>
<comment type="catalytic activity">
    <reaction evidence="2">
        <text>(2E,6E)-farnesyl diphosphate = (-)-germacrene D + diphosphate</text>
        <dbReference type="Rhea" id="RHEA:12016"/>
        <dbReference type="ChEBI" id="CHEBI:33019"/>
        <dbReference type="ChEBI" id="CHEBI:49044"/>
        <dbReference type="ChEBI" id="CHEBI:175763"/>
        <dbReference type="EC" id="4.2.3.75"/>
    </reaction>
</comment>
<comment type="cofactor">
    <cofactor evidence="1">
        <name>Mg(2+)</name>
        <dbReference type="ChEBI" id="CHEBI:18420"/>
    </cofactor>
    <text evidence="1">Binds 3 Mg(2+) ions per subunit.</text>
</comment>
<comment type="pathway">
    <text>Secondary metabolite biosynthesis; terpenoid biosynthesis.</text>
</comment>
<comment type="subcellular location">
    <subcellularLocation>
        <location evidence="3">Cytoplasm</location>
    </subcellularLocation>
</comment>
<comment type="tissue specificity">
    <text>Expressed in flowers. Detected in stems, young leaves and tendrils.</text>
</comment>
<comment type="developmental stage">
    <text>Expressed in flower buds and detected in open pre-anthesis flowers, flowers after anthesis and in early stages of fruit onset.</text>
</comment>
<comment type="domain">
    <text evidence="1">The Asp-Asp-Xaa-Xaa-Asp/Glu (DDXXD/E) motif is important for the catalytic activity, presumably through binding to Mg(2+).</text>
</comment>
<comment type="similarity">
    <text evidence="3">Belongs to the terpene synthase family. Tpsa subfamily.</text>
</comment>
<evidence type="ECO:0000250" key="1"/>
<evidence type="ECO:0000269" key="2">
    <source>
    </source>
</evidence>
<evidence type="ECO:0000305" key="3"/>
<reference key="1">
    <citation type="journal article" date="2004" name="Phytochemistry">
        <title>Vitis vinifera terpenoid cyclases: functional identification of two sesquiterpene synthase cDNAs encoding (+)-valencene synthase and (-)-germacrene D synthase and expression of mono- and sesquiterpene synthases in grapevine flowers and berries.</title>
        <authorList>
            <person name="Lucker J."/>
            <person name="Bowen P."/>
            <person name="Bohlmann J."/>
        </authorList>
    </citation>
    <scope>NUCLEOTIDE SEQUENCE [MRNA]</scope>
    <scope>FUNCTION</scope>
    <scope>CATALYTIC ACTIVITY</scope>
    <source>
        <strain>cv. Gewuerztraminer</strain>
    </source>
</reference>
<reference key="2">
    <citation type="submission" date="2004-02" db="EMBL/GenBank/DDBJ databases">
        <authorList>
            <person name="Steinmetz A.A."/>
            <person name="Lommele A."/>
            <person name="Drescher B."/>
            <person name="Driesel A.J."/>
        </authorList>
    </citation>
    <scope>NUCLEOTIDE SEQUENCE [MRNA]</scope>
    <source>
        <strain>cv. Gewuerztraminer</strain>
    </source>
</reference>
<reference key="3">
    <citation type="journal article" date="2007" name="Nature">
        <title>The grapevine genome sequence suggests ancestral hexaploidization in major angiosperm phyla.</title>
        <authorList>
            <person name="Jaillon O."/>
            <person name="Aury J.-M."/>
            <person name="Noel B."/>
            <person name="Policriti A."/>
            <person name="Clepet C."/>
            <person name="Casagrande A."/>
            <person name="Choisne N."/>
            <person name="Aubourg S."/>
            <person name="Vitulo N."/>
            <person name="Jubin C."/>
            <person name="Vezzi A."/>
            <person name="Legeai F."/>
            <person name="Hugueney P."/>
            <person name="Dasilva C."/>
            <person name="Horner D."/>
            <person name="Mica E."/>
            <person name="Jublot D."/>
            <person name="Poulain J."/>
            <person name="Bruyere C."/>
            <person name="Billault A."/>
            <person name="Segurens B."/>
            <person name="Gouyvenoux M."/>
            <person name="Ugarte E."/>
            <person name="Cattonaro F."/>
            <person name="Anthouard V."/>
            <person name="Vico V."/>
            <person name="Del Fabbro C."/>
            <person name="Alaux M."/>
            <person name="Di Gaspero G."/>
            <person name="Dumas V."/>
            <person name="Felice N."/>
            <person name="Paillard S."/>
            <person name="Juman I."/>
            <person name="Moroldo M."/>
            <person name="Scalabrin S."/>
            <person name="Canaguier A."/>
            <person name="Le Clainche I."/>
            <person name="Malacrida G."/>
            <person name="Durand E."/>
            <person name="Pesole G."/>
            <person name="Laucou V."/>
            <person name="Chatelet P."/>
            <person name="Merdinoglu D."/>
            <person name="Delledonne M."/>
            <person name="Pezzotti M."/>
            <person name="Lecharny A."/>
            <person name="Scarpelli C."/>
            <person name="Artiguenave F."/>
            <person name="Pe M.E."/>
            <person name="Valle G."/>
            <person name="Morgante M."/>
            <person name="Caboche M."/>
            <person name="Adam-Blondon A.-F."/>
            <person name="Weissenbach J."/>
            <person name="Quetier F."/>
            <person name="Wincker P."/>
        </authorList>
    </citation>
    <scope>NUCLEOTIDE SEQUENCE [LARGE SCALE GENOMIC DNA]</scope>
    <source>
        <strain>cv. Pinot noir / PN40024</strain>
    </source>
</reference>
<reference key="4">
    <citation type="journal article" date="2007" name="PLoS ONE">
        <title>A high quality draft consensus sequence of the genome of a heterozygous grapevine variety.</title>
        <authorList>
            <person name="Velasco R."/>
            <person name="Zharkikh A."/>
            <person name="Troggio M."/>
            <person name="Cartwright D.A."/>
            <person name="Cestaro A."/>
            <person name="Pruss D."/>
            <person name="Pindo M."/>
            <person name="FitzGerald L.M."/>
            <person name="Vezzulli S."/>
            <person name="Reid J."/>
            <person name="Malacarne G."/>
            <person name="Iliev D."/>
            <person name="Coppola G."/>
            <person name="Wardell B."/>
            <person name="Micheletti D."/>
            <person name="Macalma T."/>
            <person name="Facci M."/>
            <person name="Mitchell J.T."/>
            <person name="Perazzolli M."/>
            <person name="Eldredge G."/>
            <person name="Gatto P."/>
            <person name="Oyzerski R."/>
            <person name="Moretto M."/>
            <person name="Gutin N."/>
            <person name="Stefanini M."/>
            <person name="Chen Y."/>
            <person name="Segala C."/>
            <person name="Davenport C."/>
            <person name="Dematte L."/>
            <person name="Mraz A."/>
            <person name="Battilana J."/>
            <person name="Stormo K."/>
            <person name="Costa F."/>
            <person name="Tao Q."/>
            <person name="Si-Ammour A."/>
            <person name="Harkins T."/>
            <person name="Lackey A."/>
            <person name="Perbost C."/>
            <person name="Taillon B."/>
            <person name="Stella A."/>
            <person name="Solovyev V."/>
            <person name="Fawcett J.A."/>
            <person name="Sterck L."/>
            <person name="Vandepoele K."/>
            <person name="Grando S.M."/>
            <person name="Toppo S."/>
            <person name="Moser C."/>
            <person name="Lanchbury J."/>
            <person name="Bogden R."/>
            <person name="Skolnick M."/>
            <person name="Sgaramella V."/>
            <person name="Bhatnagar S.K."/>
            <person name="Fontana P."/>
            <person name="Gutin A."/>
            <person name="Van de Peer Y."/>
            <person name="Salamini F."/>
            <person name="Viola R."/>
        </authorList>
    </citation>
    <scope>NUCLEOTIDE SEQUENCE [LARGE SCALE GENOMIC DNA]</scope>
    <source>
        <strain>cv. Pinot noir</strain>
    </source>
</reference>
<sequence length="557" mass="64269">MSVQSSGVLLAPSKNLSPEVGRRCANFHPSIWGDHFLSYASEFTNTDDHLKQHVQQLKEEVRKMLMAADDDSAQKLLLIDAIQRLGVAYHFESEIDEVLKHMFDGSVVSAEEDVYTASLRFRLLRQQGYHVSCDLFNNFKDNEGNFKESLSSDVRGMLSLYEATHFRVHGEDILDEALAFTTTHLQSATKHSSNPLAEQVVHALKQPIRKGLPRLEARHYFSVYQADDSHNKALLKLAKLDFNLLQKLHQKELSDISAWWKDLDFAHKLPFARDRVVECYFWILGVYFEPQFFFARRILTKVIAMTSIIDDIYDVYGTLEELELFTEAVERWDISAIDQLPEYMRVCYQALLYVYSEIEEEMAKEGRSYRLYYAKEAMKNQVRAYYEEAKWLQVQQIPTMEEYMPVALVTSAYSMLATTSFVGMGDAVTKESFDWIFSKPKIVRASAIVCRLMDDMVFHKFEQKRGHVASAVECYMKQHGASEQETPNEFPQPVREAWKDINEECLIPTAVPMPILMRVLNLARVIDVIYKNEDGYTHFGAVLKDFVTSMLIDPVPI</sequence>
<name>TPSGD_VITVI</name>
<feature type="chain" id="PRO_0000412252" description="(-)-germacrene D synthase">
    <location>
        <begin position="1"/>
        <end position="557"/>
    </location>
</feature>
<feature type="short sequence motif" description="DDXXD motif">
    <location>
        <begin position="310"/>
        <end position="314"/>
    </location>
</feature>
<feature type="binding site" evidence="1">
    <location>
        <position position="310"/>
    </location>
    <ligand>
        <name>Mg(2+)</name>
        <dbReference type="ChEBI" id="CHEBI:18420"/>
        <label>1</label>
    </ligand>
</feature>
<feature type="binding site" evidence="1">
    <location>
        <position position="310"/>
    </location>
    <ligand>
        <name>Mg(2+)</name>
        <dbReference type="ChEBI" id="CHEBI:18420"/>
        <label>2</label>
    </ligand>
</feature>
<feature type="binding site" evidence="1">
    <location>
        <position position="314"/>
    </location>
    <ligand>
        <name>Mg(2+)</name>
        <dbReference type="ChEBI" id="CHEBI:18420"/>
        <label>1</label>
    </ligand>
</feature>
<feature type="binding site" evidence="1">
    <location>
        <position position="314"/>
    </location>
    <ligand>
        <name>Mg(2+)</name>
        <dbReference type="ChEBI" id="CHEBI:18420"/>
        <label>2</label>
    </ligand>
</feature>
<feature type="binding site" evidence="1">
    <location>
        <position position="462"/>
    </location>
    <ligand>
        <name>Mg(2+)</name>
        <dbReference type="ChEBI" id="CHEBI:18420"/>
        <label>3</label>
    </ligand>
</feature>
<feature type="sequence conflict" description="In Ref. 3; CBI20483 and 4; CAN68620/CAN83470." evidence="3" ref="3 4">
    <original>G</original>
    <variation>V</variation>
    <location>
        <position position="7"/>
    </location>
</feature>
<feature type="sequence conflict" description="In Ref. 4; CAN68620/CAN83470." evidence="3" ref="4">
    <original>H</original>
    <variation>Y</variation>
    <location>
        <position position="191"/>
    </location>
</feature>
<feature type="sequence conflict" description="In Ref. 4; CAN83470." evidence="3" ref="4">
    <original>F</original>
    <variation>L</variation>
    <location>
        <position position="421"/>
    </location>
</feature>
<feature type="sequence conflict" description="In Ref. 4; CAN83470." evidence="3" ref="4">
    <original>S</original>
    <variation>T</variation>
    <location>
        <position position="432"/>
    </location>
</feature>
<feature type="sequence conflict" description="In Ref. 3; CBI20483 and 4; CAN68620/CAN83470." evidence="3" ref="3 4">
    <original>F</original>
    <variation>S</variation>
    <location>
        <position position="458"/>
    </location>
</feature>
<feature type="sequence conflict" description="In Ref. 3; CBI20483 and 4; CAN68620/CAN83470." evidence="3" ref="3 4">
    <original>P</original>
    <variation>H</variation>
    <location>
        <position position="487"/>
    </location>
</feature>
<feature type="sequence conflict" description="In Ref. 3; CBI20483 and 4; CAN68620/CAN83470." evidence="3" ref="3 4">
    <original>PQPVRE</original>
    <variation>HKQVRD</variation>
    <location>
        <begin position="491"/>
        <end position="496"/>
    </location>
</feature>
<feature type="sequence conflict" description="In Ref. 3; CBI20483 and 4; CAN68620/CAN83470." evidence="3" ref="3 4">
    <original>FGA</original>
    <variation>SGT</variation>
    <location>
        <begin position="539"/>
        <end position="541"/>
    </location>
</feature>
<accession>Q6Q3H3</accession>
<accession>A5BPP0</accession>
<accession>A5C4C3</accession>
<accession>E0CT34</accession>
<protein>
    <recommendedName>
        <fullName>(-)-germacrene D synthase</fullName>
        <ecNumber>4.2.3.22</ecNumber>
        <ecNumber>4.2.3.75</ecNumber>
    </recommendedName>
</protein>
<gene>
    <name type="ordered locus">VIT_19s0014g04930</name>
    <name type="ORF">VIT_00014569001</name>
    <name type="ORF">VITISV_013313</name>
    <name type="ORF">VITISV_030783</name>
    <name type="ORF">Vv19s0014g04930</name>
</gene>
<keyword id="KW-0963">Cytoplasm</keyword>
<keyword id="KW-0456">Lyase</keyword>
<keyword id="KW-0460">Magnesium</keyword>
<keyword id="KW-0479">Metal-binding</keyword>
<keyword id="KW-1185">Reference proteome</keyword>
<dbReference type="EC" id="4.2.3.22"/>
<dbReference type="EC" id="4.2.3.75"/>
<dbReference type="EMBL" id="AY561842">
    <property type="protein sequence ID" value="AAS66357.1"/>
    <property type="molecule type" value="mRNA"/>
</dbReference>
<dbReference type="EMBL" id="FN595229">
    <property type="protein sequence ID" value="CBI20483.3"/>
    <property type="molecule type" value="Genomic_DNA"/>
</dbReference>
<dbReference type="EMBL" id="FN597046">
    <property type="status" value="NOT_ANNOTATED_CDS"/>
    <property type="molecule type" value="Genomic_DNA"/>
</dbReference>
<dbReference type="EMBL" id="AM481907">
    <property type="protein sequence ID" value="CAN68620.1"/>
    <property type="molecule type" value="Genomic_DNA"/>
</dbReference>
<dbReference type="EMBL" id="AM466733">
    <property type="protein sequence ID" value="CAN83470.1"/>
    <property type="molecule type" value="Genomic_DNA"/>
</dbReference>
<dbReference type="SMR" id="Q6Q3H3"/>
<dbReference type="FunCoup" id="Q6Q3H3">
    <property type="interactions" value="44"/>
</dbReference>
<dbReference type="STRING" id="29760.Q6Q3H3"/>
<dbReference type="PaxDb" id="29760-VIT_19s0014g04930.t01"/>
<dbReference type="KEGG" id="vvi:100232954"/>
<dbReference type="eggNOG" id="ENOG502QUCN">
    <property type="taxonomic scope" value="Eukaryota"/>
</dbReference>
<dbReference type="HOGENOM" id="CLU_003125_7_2_1"/>
<dbReference type="InParanoid" id="Q6Q3H3"/>
<dbReference type="BRENDA" id="4.2.3.75">
    <property type="organism ID" value="6671"/>
</dbReference>
<dbReference type="UniPathway" id="UPA00213"/>
<dbReference type="Proteomes" id="UP000009183">
    <property type="component" value="Chromosome 19"/>
</dbReference>
<dbReference type="ExpressionAtlas" id="Q6Q3H3">
    <property type="expression patterns" value="baseline and differential"/>
</dbReference>
<dbReference type="GO" id="GO:0005737">
    <property type="term" value="C:cytoplasm"/>
    <property type="evidence" value="ECO:0007669"/>
    <property type="project" value="UniProtKB-SubCell"/>
</dbReference>
<dbReference type="GO" id="GO:0034004">
    <property type="term" value="F:germacradienol synthase activity"/>
    <property type="evidence" value="ECO:0007669"/>
    <property type="project" value="UniProtKB-EC"/>
</dbReference>
<dbReference type="GO" id="GO:0052577">
    <property type="term" value="F:germacrene-D synthase activity"/>
    <property type="evidence" value="ECO:0007669"/>
    <property type="project" value="UniProtKB-EC"/>
</dbReference>
<dbReference type="GO" id="GO:0000287">
    <property type="term" value="F:magnesium ion binding"/>
    <property type="evidence" value="ECO:0007669"/>
    <property type="project" value="InterPro"/>
</dbReference>
<dbReference type="GO" id="GO:0016102">
    <property type="term" value="P:diterpenoid biosynthetic process"/>
    <property type="evidence" value="ECO:0007669"/>
    <property type="project" value="InterPro"/>
</dbReference>
<dbReference type="CDD" id="cd00684">
    <property type="entry name" value="Terpene_cyclase_plant_C1"/>
    <property type="match status" value="1"/>
</dbReference>
<dbReference type="FunFam" id="1.10.600.10:FF:000007">
    <property type="entry name" value="Isoprene synthase, chloroplastic"/>
    <property type="match status" value="1"/>
</dbReference>
<dbReference type="FunFam" id="1.50.10.130:FF:000001">
    <property type="entry name" value="Isoprene synthase, chloroplastic"/>
    <property type="match status" value="1"/>
</dbReference>
<dbReference type="Gene3D" id="1.10.600.10">
    <property type="entry name" value="Farnesyl Diphosphate Synthase"/>
    <property type="match status" value="1"/>
</dbReference>
<dbReference type="Gene3D" id="1.50.10.130">
    <property type="entry name" value="Terpene synthase, N-terminal domain"/>
    <property type="match status" value="1"/>
</dbReference>
<dbReference type="InterPro" id="IPR008949">
    <property type="entry name" value="Isoprenoid_synthase_dom_sf"/>
</dbReference>
<dbReference type="InterPro" id="IPR034741">
    <property type="entry name" value="Terpene_cyclase-like_1_C"/>
</dbReference>
<dbReference type="InterPro" id="IPR044814">
    <property type="entry name" value="Terpene_cyclase_plant_C1"/>
</dbReference>
<dbReference type="InterPro" id="IPR001906">
    <property type="entry name" value="Terpene_synth_N"/>
</dbReference>
<dbReference type="InterPro" id="IPR036965">
    <property type="entry name" value="Terpene_synth_N_sf"/>
</dbReference>
<dbReference type="InterPro" id="IPR050148">
    <property type="entry name" value="Terpene_synthase-like"/>
</dbReference>
<dbReference type="InterPro" id="IPR005630">
    <property type="entry name" value="Terpene_synthase_metal-bd"/>
</dbReference>
<dbReference type="InterPro" id="IPR008930">
    <property type="entry name" value="Terpenoid_cyclase/PrenylTrfase"/>
</dbReference>
<dbReference type="PANTHER" id="PTHR31225:SF221">
    <property type="entry name" value="(-)-GERMACRENE D SYNTHASE"/>
    <property type="match status" value="1"/>
</dbReference>
<dbReference type="PANTHER" id="PTHR31225">
    <property type="entry name" value="OS04G0344100 PROTEIN-RELATED"/>
    <property type="match status" value="1"/>
</dbReference>
<dbReference type="Pfam" id="PF01397">
    <property type="entry name" value="Terpene_synth"/>
    <property type="match status" value="1"/>
</dbReference>
<dbReference type="Pfam" id="PF03936">
    <property type="entry name" value="Terpene_synth_C"/>
    <property type="match status" value="1"/>
</dbReference>
<dbReference type="SFLD" id="SFLDG01019">
    <property type="entry name" value="Terpene_Cyclase_Like_1_C_Termi"/>
    <property type="match status" value="1"/>
</dbReference>
<dbReference type="SFLD" id="SFLDG01604">
    <property type="entry name" value="Terpene_Cyclase_Like_1_C_Termi"/>
    <property type="match status" value="1"/>
</dbReference>
<dbReference type="SUPFAM" id="SSF48239">
    <property type="entry name" value="Terpenoid cyclases/Protein prenyltransferases"/>
    <property type="match status" value="1"/>
</dbReference>
<dbReference type="SUPFAM" id="SSF48576">
    <property type="entry name" value="Terpenoid synthases"/>
    <property type="match status" value="1"/>
</dbReference>
<organism>
    <name type="scientific">Vitis vinifera</name>
    <name type="common">Grape</name>
    <dbReference type="NCBI Taxonomy" id="29760"/>
    <lineage>
        <taxon>Eukaryota</taxon>
        <taxon>Viridiplantae</taxon>
        <taxon>Streptophyta</taxon>
        <taxon>Embryophyta</taxon>
        <taxon>Tracheophyta</taxon>
        <taxon>Spermatophyta</taxon>
        <taxon>Magnoliopsida</taxon>
        <taxon>eudicotyledons</taxon>
        <taxon>Gunneridae</taxon>
        <taxon>Pentapetalae</taxon>
        <taxon>rosids</taxon>
        <taxon>Vitales</taxon>
        <taxon>Vitaceae</taxon>
        <taxon>Viteae</taxon>
        <taxon>Vitis</taxon>
    </lineage>
</organism>